<organism>
    <name type="scientific">Phenylobacterium zucineum (strain HLK1)</name>
    <dbReference type="NCBI Taxonomy" id="450851"/>
    <lineage>
        <taxon>Bacteria</taxon>
        <taxon>Pseudomonadati</taxon>
        <taxon>Pseudomonadota</taxon>
        <taxon>Alphaproteobacteria</taxon>
        <taxon>Caulobacterales</taxon>
        <taxon>Caulobacteraceae</taxon>
        <taxon>Phenylobacterium</taxon>
    </lineage>
</organism>
<name>RSMA_PHEZH</name>
<dbReference type="EC" id="2.1.1.182" evidence="1"/>
<dbReference type="EMBL" id="CP000747">
    <property type="protein sequence ID" value="ACG78121.1"/>
    <property type="molecule type" value="Genomic_DNA"/>
</dbReference>
<dbReference type="RefSeq" id="WP_012522263.1">
    <property type="nucleotide sequence ID" value="NC_011144.1"/>
</dbReference>
<dbReference type="SMR" id="B4RBS4"/>
<dbReference type="STRING" id="450851.PHZ_c1710"/>
<dbReference type="KEGG" id="pzu:PHZ_c1710"/>
<dbReference type="eggNOG" id="COG0030">
    <property type="taxonomic scope" value="Bacteria"/>
</dbReference>
<dbReference type="HOGENOM" id="CLU_041220_0_1_5"/>
<dbReference type="OrthoDB" id="9814755at2"/>
<dbReference type="Proteomes" id="UP000001868">
    <property type="component" value="Chromosome"/>
</dbReference>
<dbReference type="GO" id="GO:0005829">
    <property type="term" value="C:cytosol"/>
    <property type="evidence" value="ECO:0007669"/>
    <property type="project" value="TreeGrafter"/>
</dbReference>
<dbReference type="GO" id="GO:0052908">
    <property type="term" value="F:16S rRNA (adenine(1518)-N(6)/adenine(1519)-N(6))-dimethyltransferase activity"/>
    <property type="evidence" value="ECO:0007669"/>
    <property type="project" value="UniProtKB-EC"/>
</dbReference>
<dbReference type="GO" id="GO:0003723">
    <property type="term" value="F:RNA binding"/>
    <property type="evidence" value="ECO:0007669"/>
    <property type="project" value="UniProtKB-KW"/>
</dbReference>
<dbReference type="CDD" id="cd02440">
    <property type="entry name" value="AdoMet_MTases"/>
    <property type="match status" value="1"/>
</dbReference>
<dbReference type="FunFam" id="3.40.50.150:FF:000023">
    <property type="entry name" value="Ribosomal RNA small subunit methyltransferase A"/>
    <property type="match status" value="1"/>
</dbReference>
<dbReference type="Gene3D" id="1.10.8.100">
    <property type="entry name" value="Ribosomal RNA adenine dimethylase-like, domain 2"/>
    <property type="match status" value="1"/>
</dbReference>
<dbReference type="Gene3D" id="3.40.50.150">
    <property type="entry name" value="Vaccinia Virus protein VP39"/>
    <property type="match status" value="1"/>
</dbReference>
<dbReference type="HAMAP" id="MF_00607">
    <property type="entry name" value="16SrRNA_methyltr_A"/>
    <property type="match status" value="1"/>
</dbReference>
<dbReference type="InterPro" id="IPR001737">
    <property type="entry name" value="KsgA/Erm"/>
</dbReference>
<dbReference type="InterPro" id="IPR023165">
    <property type="entry name" value="rRNA_Ade_diMease-like_C"/>
</dbReference>
<dbReference type="InterPro" id="IPR020596">
    <property type="entry name" value="rRNA_Ade_Mease_Trfase_CS"/>
</dbReference>
<dbReference type="InterPro" id="IPR020598">
    <property type="entry name" value="rRNA_Ade_methylase_Trfase_N"/>
</dbReference>
<dbReference type="InterPro" id="IPR011530">
    <property type="entry name" value="rRNA_adenine_dimethylase"/>
</dbReference>
<dbReference type="InterPro" id="IPR029063">
    <property type="entry name" value="SAM-dependent_MTases_sf"/>
</dbReference>
<dbReference type="NCBIfam" id="TIGR00755">
    <property type="entry name" value="ksgA"/>
    <property type="match status" value="1"/>
</dbReference>
<dbReference type="PANTHER" id="PTHR11727">
    <property type="entry name" value="DIMETHYLADENOSINE TRANSFERASE"/>
    <property type="match status" value="1"/>
</dbReference>
<dbReference type="PANTHER" id="PTHR11727:SF7">
    <property type="entry name" value="DIMETHYLADENOSINE TRANSFERASE-RELATED"/>
    <property type="match status" value="1"/>
</dbReference>
<dbReference type="Pfam" id="PF00398">
    <property type="entry name" value="RrnaAD"/>
    <property type="match status" value="1"/>
</dbReference>
<dbReference type="SMART" id="SM00650">
    <property type="entry name" value="rADc"/>
    <property type="match status" value="1"/>
</dbReference>
<dbReference type="SUPFAM" id="SSF53335">
    <property type="entry name" value="S-adenosyl-L-methionine-dependent methyltransferases"/>
    <property type="match status" value="1"/>
</dbReference>
<dbReference type="PROSITE" id="PS01131">
    <property type="entry name" value="RRNA_A_DIMETH"/>
    <property type="match status" value="1"/>
</dbReference>
<dbReference type="PROSITE" id="PS51689">
    <property type="entry name" value="SAM_RNA_A_N6_MT"/>
    <property type="match status" value="1"/>
</dbReference>
<sequence>MSLETLPTLREALEAHGLWAKKAFGQHFLLDLNITRKIARLAQVGDGDVVIEVGPGPGGLTRALLETGARVIAVEKDERFRPLLQEVADAAPHLTLVFGDALTADEAALSAGRPAHLVSNLPYNVGTPLLIKWLTGPWTPASLTLMFQKEVADRITAAPGEDAYGRLAVIAQATADARPVMDVPARAFTPPPKVESAVVRLEPRAARPSPERLDALQKVTAAAFGQRRKMLRSSLKALGGEPLITAAGLDPAARAEVVPVAGFLALADAWLARREAPATAAPRGR</sequence>
<gene>
    <name evidence="1" type="primary">rsmA</name>
    <name evidence="1" type="synonym">ksgA</name>
    <name type="ordered locus">PHZ_c1710</name>
</gene>
<feature type="chain" id="PRO_1000130303" description="Ribosomal RNA small subunit methyltransferase A">
    <location>
        <begin position="1"/>
        <end position="285"/>
    </location>
</feature>
<feature type="binding site" evidence="1">
    <location>
        <position position="27"/>
    </location>
    <ligand>
        <name>S-adenosyl-L-methionine</name>
        <dbReference type="ChEBI" id="CHEBI:59789"/>
    </ligand>
</feature>
<feature type="binding site" evidence="1">
    <location>
        <position position="29"/>
    </location>
    <ligand>
        <name>S-adenosyl-L-methionine</name>
        <dbReference type="ChEBI" id="CHEBI:59789"/>
    </ligand>
</feature>
<feature type="binding site" evidence="1">
    <location>
        <position position="54"/>
    </location>
    <ligand>
        <name>S-adenosyl-L-methionine</name>
        <dbReference type="ChEBI" id="CHEBI:59789"/>
    </ligand>
</feature>
<feature type="binding site" evidence="1">
    <location>
        <position position="75"/>
    </location>
    <ligand>
        <name>S-adenosyl-L-methionine</name>
        <dbReference type="ChEBI" id="CHEBI:59789"/>
    </ligand>
</feature>
<feature type="binding site" evidence="1">
    <location>
        <position position="100"/>
    </location>
    <ligand>
        <name>S-adenosyl-L-methionine</name>
        <dbReference type="ChEBI" id="CHEBI:59789"/>
    </ligand>
</feature>
<feature type="binding site" evidence="1">
    <location>
        <position position="120"/>
    </location>
    <ligand>
        <name>S-adenosyl-L-methionine</name>
        <dbReference type="ChEBI" id="CHEBI:59789"/>
    </ligand>
</feature>
<accession>B4RBS4</accession>
<proteinExistence type="inferred from homology"/>
<evidence type="ECO:0000255" key="1">
    <source>
        <dbReference type="HAMAP-Rule" id="MF_00607"/>
    </source>
</evidence>
<keyword id="KW-0963">Cytoplasm</keyword>
<keyword id="KW-0489">Methyltransferase</keyword>
<keyword id="KW-1185">Reference proteome</keyword>
<keyword id="KW-0694">RNA-binding</keyword>
<keyword id="KW-0698">rRNA processing</keyword>
<keyword id="KW-0949">S-adenosyl-L-methionine</keyword>
<keyword id="KW-0808">Transferase</keyword>
<comment type="function">
    <text evidence="1">Specifically dimethylates two adjacent adenosines (A1518 and A1519) in the loop of a conserved hairpin near the 3'-end of 16S rRNA in the 30S particle. May play a critical role in biogenesis of 30S subunits.</text>
</comment>
<comment type="catalytic activity">
    <reaction evidence="1">
        <text>adenosine(1518)/adenosine(1519) in 16S rRNA + 4 S-adenosyl-L-methionine = N(6)-dimethyladenosine(1518)/N(6)-dimethyladenosine(1519) in 16S rRNA + 4 S-adenosyl-L-homocysteine + 4 H(+)</text>
        <dbReference type="Rhea" id="RHEA:19609"/>
        <dbReference type="Rhea" id="RHEA-COMP:10232"/>
        <dbReference type="Rhea" id="RHEA-COMP:10233"/>
        <dbReference type="ChEBI" id="CHEBI:15378"/>
        <dbReference type="ChEBI" id="CHEBI:57856"/>
        <dbReference type="ChEBI" id="CHEBI:59789"/>
        <dbReference type="ChEBI" id="CHEBI:74411"/>
        <dbReference type="ChEBI" id="CHEBI:74493"/>
        <dbReference type="EC" id="2.1.1.182"/>
    </reaction>
</comment>
<comment type="subcellular location">
    <subcellularLocation>
        <location evidence="1">Cytoplasm</location>
    </subcellularLocation>
</comment>
<comment type="similarity">
    <text evidence="1">Belongs to the class I-like SAM-binding methyltransferase superfamily. rRNA adenine N(6)-methyltransferase family. RsmA subfamily.</text>
</comment>
<reference key="1">
    <citation type="journal article" date="2008" name="BMC Genomics">
        <title>Complete genome of Phenylobacterium zucineum - a novel facultative intracellular bacterium isolated from human erythroleukemia cell line K562.</title>
        <authorList>
            <person name="Luo Y."/>
            <person name="Xu X."/>
            <person name="Ding Z."/>
            <person name="Liu Z."/>
            <person name="Zhang B."/>
            <person name="Yan Z."/>
            <person name="Sun J."/>
            <person name="Hu S."/>
            <person name="Hu X."/>
        </authorList>
    </citation>
    <scope>NUCLEOTIDE SEQUENCE [LARGE SCALE GENOMIC DNA]</scope>
    <source>
        <strain>HLK1</strain>
    </source>
</reference>
<protein>
    <recommendedName>
        <fullName evidence="1">Ribosomal RNA small subunit methyltransferase A</fullName>
        <ecNumber evidence="1">2.1.1.182</ecNumber>
    </recommendedName>
    <alternativeName>
        <fullName evidence="1">16S rRNA (adenine(1518)-N(6)/adenine(1519)-N(6))-dimethyltransferase</fullName>
    </alternativeName>
    <alternativeName>
        <fullName evidence="1">16S rRNA dimethyladenosine transferase</fullName>
    </alternativeName>
    <alternativeName>
        <fullName evidence="1">16S rRNA dimethylase</fullName>
    </alternativeName>
    <alternativeName>
        <fullName evidence="1">S-adenosylmethionine-6-N', N'-adenosyl(rRNA) dimethyltransferase</fullName>
    </alternativeName>
</protein>